<dbReference type="EC" id="2.7.4.22" evidence="1"/>
<dbReference type="EMBL" id="CP000411">
    <property type="protein sequence ID" value="ABJ56886.1"/>
    <property type="molecule type" value="Genomic_DNA"/>
</dbReference>
<dbReference type="RefSeq" id="WP_002822575.1">
    <property type="nucleotide sequence ID" value="NC_008528.1"/>
</dbReference>
<dbReference type="SMR" id="Q04F86"/>
<dbReference type="STRING" id="203123.OEOE_0977"/>
<dbReference type="KEGG" id="ooe:OEOE_0977"/>
<dbReference type="eggNOG" id="COG0528">
    <property type="taxonomic scope" value="Bacteria"/>
</dbReference>
<dbReference type="HOGENOM" id="CLU_033861_0_0_9"/>
<dbReference type="UniPathway" id="UPA00159">
    <property type="reaction ID" value="UER00275"/>
</dbReference>
<dbReference type="Proteomes" id="UP000000774">
    <property type="component" value="Chromosome"/>
</dbReference>
<dbReference type="GO" id="GO:0005737">
    <property type="term" value="C:cytoplasm"/>
    <property type="evidence" value="ECO:0007669"/>
    <property type="project" value="UniProtKB-SubCell"/>
</dbReference>
<dbReference type="GO" id="GO:0005524">
    <property type="term" value="F:ATP binding"/>
    <property type="evidence" value="ECO:0007669"/>
    <property type="project" value="UniProtKB-KW"/>
</dbReference>
<dbReference type="GO" id="GO:0033862">
    <property type="term" value="F:UMP kinase activity"/>
    <property type="evidence" value="ECO:0007669"/>
    <property type="project" value="UniProtKB-EC"/>
</dbReference>
<dbReference type="GO" id="GO:0044210">
    <property type="term" value="P:'de novo' CTP biosynthetic process"/>
    <property type="evidence" value="ECO:0007669"/>
    <property type="project" value="UniProtKB-UniRule"/>
</dbReference>
<dbReference type="GO" id="GO:0006225">
    <property type="term" value="P:UDP biosynthetic process"/>
    <property type="evidence" value="ECO:0007669"/>
    <property type="project" value="TreeGrafter"/>
</dbReference>
<dbReference type="CDD" id="cd04254">
    <property type="entry name" value="AAK_UMPK-PyrH-Ec"/>
    <property type="match status" value="1"/>
</dbReference>
<dbReference type="FunFam" id="3.40.1160.10:FF:000001">
    <property type="entry name" value="Uridylate kinase"/>
    <property type="match status" value="1"/>
</dbReference>
<dbReference type="Gene3D" id="3.40.1160.10">
    <property type="entry name" value="Acetylglutamate kinase-like"/>
    <property type="match status" value="1"/>
</dbReference>
<dbReference type="HAMAP" id="MF_01220_B">
    <property type="entry name" value="PyrH_B"/>
    <property type="match status" value="1"/>
</dbReference>
<dbReference type="InterPro" id="IPR036393">
    <property type="entry name" value="AceGlu_kinase-like_sf"/>
</dbReference>
<dbReference type="InterPro" id="IPR001048">
    <property type="entry name" value="Asp/Glu/Uridylate_kinase"/>
</dbReference>
<dbReference type="InterPro" id="IPR011817">
    <property type="entry name" value="Uridylate_kinase"/>
</dbReference>
<dbReference type="InterPro" id="IPR015963">
    <property type="entry name" value="Uridylate_kinase_bac"/>
</dbReference>
<dbReference type="NCBIfam" id="TIGR02075">
    <property type="entry name" value="pyrH_bact"/>
    <property type="match status" value="1"/>
</dbReference>
<dbReference type="PANTHER" id="PTHR42833">
    <property type="entry name" value="URIDYLATE KINASE"/>
    <property type="match status" value="1"/>
</dbReference>
<dbReference type="PANTHER" id="PTHR42833:SF4">
    <property type="entry name" value="URIDYLATE KINASE PUMPKIN, CHLOROPLASTIC"/>
    <property type="match status" value="1"/>
</dbReference>
<dbReference type="Pfam" id="PF00696">
    <property type="entry name" value="AA_kinase"/>
    <property type="match status" value="1"/>
</dbReference>
<dbReference type="PIRSF" id="PIRSF005650">
    <property type="entry name" value="Uridylate_kin"/>
    <property type="match status" value="1"/>
</dbReference>
<dbReference type="SUPFAM" id="SSF53633">
    <property type="entry name" value="Carbamate kinase-like"/>
    <property type="match status" value="1"/>
</dbReference>
<feature type="chain" id="PRO_1000053970" description="Uridylate kinase">
    <location>
        <begin position="1"/>
        <end position="243"/>
    </location>
</feature>
<feature type="region of interest" description="Involved in allosteric activation by GTP" evidence="1">
    <location>
        <begin position="20"/>
        <end position="25"/>
    </location>
</feature>
<feature type="binding site" evidence="1">
    <location>
        <begin position="12"/>
        <end position="15"/>
    </location>
    <ligand>
        <name>ATP</name>
        <dbReference type="ChEBI" id="CHEBI:30616"/>
    </ligand>
</feature>
<feature type="binding site" evidence="1">
    <location>
        <position position="56"/>
    </location>
    <ligand>
        <name>UMP</name>
        <dbReference type="ChEBI" id="CHEBI:57865"/>
    </ligand>
</feature>
<feature type="binding site" evidence="1">
    <location>
        <position position="57"/>
    </location>
    <ligand>
        <name>ATP</name>
        <dbReference type="ChEBI" id="CHEBI:30616"/>
    </ligand>
</feature>
<feature type="binding site" evidence="1">
    <location>
        <position position="61"/>
    </location>
    <ligand>
        <name>ATP</name>
        <dbReference type="ChEBI" id="CHEBI:30616"/>
    </ligand>
</feature>
<feature type="binding site" evidence="1">
    <location>
        <position position="76"/>
    </location>
    <ligand>
        <name>UMP</name>
        <dbReference type="ChEBI" id="CHEBI:57865"/>
    </ligand>
</feature>
<feature type="binding site" evidence="1">
    <location>
        <begin position="137"/>
        <end position="144"/>
    </location>
    <ligand>
        <name>UMP</name>
        <dbReference type="ChEBI" id="CHEBI:57865"/>
    </ligand>
</feature>
<feature type="binding site" evidence="1">
    <location>
        <position position="165"/>
    </location>
    <ligand>
        <name>ATP</name>
        <dbReference type="ChEBI" id="CHEBI:30616"/>
    </ligand>
</feature>
<feature type="binding site" evidence="1">
    <location>
        <position position="171"/>
    </location>
    <ligand>
        <name>ATP</name>
        <dbReference type="ChEBI" id="CHEBI:30616"/>
    </ligand>
</feature>
<feature type="binding site" evidence="1">
    <location>
        <position position="174"/>
    </location>
    <ligand>
        <name>ATP</name>
        <dbReference type="ChEBI" id="CHEBI:30616"/>
    </ligand>
</feature>
<sequence>MTEIKFHRVLLKLSGEALAGPGGSGIDLTTVKRVANELAEIKRAYPQVQIAIVNGGGNLWRGEPAAKAGMDRARADYIGMLGTVMNALSLADALEQAGVVTRVLTAIEMRQIAEPYIRGRAIRHLEKGRIVIFGAGTGSPYFSTDTTAALRAAEINADAILMGKNGVDGVYDSDPRKNNEAIKFAELTYDEVLRKDLKVMDSTAGAMAKDTDMPLVVFNLNEAGNIQKAIEGQDIGTVIKGSK</sequence>
<evidence type="ECO:0000255" key="1">
    <source>
        <dbReference type="HAMAP-Rule" id="MF_01220"/>
    </source>
</evidence>
<accession>Q04F86</accession>
<gene>
    <name evidence="1" type="primary">pyrH</name>
    <name type="ordered locus">OEOE_0977</name>
</gene>
<keyword id="KW-0021">Allosteric enzyme</keyword>
<keyword id="KW-0067">ATP-binding</keyword>
<keyword id="KW-0963">Cytoplasm</keyword>
<keyword id="KW-0418">Kinase</keyword>
<keyword id="KW-0547">Nucleotide-binding</keyword>
<keyword id="KW-0665">Pyrimidine biosynthesis</keyword>
<keyword id="KW-1185">Reference proteome</keyword>
<keyword id="KW-0808">Transferase</keyword>
<proteinExistence type="inferred from homology"/>
<name>PYRH_OENOB</name>
<comment type="function">
    <text evidence="1">Catalyzes the reversible phosphorylation of UMP to UDP.</text>
</comment>
<comment type="catalytic activity">
    <reaction evidence="1">
        <text>UMP + ATP = UDP + ADP</text>
        <dbReference type="Rhea" id="RHEA:24400"/>
        <dbReference type="ChEBI" id="CHEBI:30616"/>
        <dbReference type="ChEBI" id="CHEBI:57865"/>
        <dbReference type="ChEBI" id="CHEBI:58223"/>
        <dbReference type="ChEBI" id="CHEBI:456216"/>
        <dbReference type="EC" id="2.7.4.22"/>
    </reaction>
</comment>
<comment type="activity regulation">
    <text evidence="1">Allosterically activated by GTP. Inhibited by UTP.</text>
</comment>
<comment type="pathway">
    <text evidence="1">Pyrimidine metabolism; CTP biosynthesis via de novo pathway; UDP from UMP (UMPK route): step 1/1.</text>
</comment>
<comment type="subunit">
    <text evidence="1">Homohexamer.</text>
</comment>
<comment type="subcellular location">
    <subcellularLocation>
        <location evidence="1">Cytoplasm</location>
    </subcellularLocation>
</comment>
<comment type="similarity">
    <text evidence="1">Belongs to the UMP kinase family.</text>
</comment>
<organism>
    <name type="scientific">Oenococcus oeni (strain ATCC BAA-331 / PSU-1)</name>
    <dbReference type="NCBI Taxonomy" id="203123"/>
    <lineage>
        <taxon>Bacteria</taxon>
        <taxon>Bacillati</taxon>
        <taxon>Bacillota</taxon>
        <taxon>Bacilli</taxon>
        <taxon>Lactobacillales</taxon>
        <taxon>Lactobacillaceae</taxon>
        <taxon>Oenococcus</taxon>
    </lineage>
</organism>
<reference key="1">
    <citation type="journal article" date="2006" name="Proc. Natl. Acad. Sci. U.S.A.">
        <title>Comparative genomics of the lactic acid bacteria.</title>
        <authorList>
            <person name="Makarova K.S."/>
            <person name="Slesarev A."/>
            <person name="Wolf Y.I."/>
            <person name="Sorokin A."/>
            <person name="Mirkin B."/>
            <person name="Koonin E.V."/>
            <person name="Pavlov A."/>
            <person name="Pavlova N."/>
            <person name="Karamychev V."/>
            <person name="Polouchine N."/>
            <person name="Shakhova V."/>
            <person name="Grigoriev I."/>
            <person name="Lou Y."/>
            <person name="Rohksar D."/>
            <person name="Lucas S."/>
            <person name="Huang K."/>
            <person name="Goodstein D.M."/>
            <person name="Hawkins T."/>
            <person name="Plengvidhya V."/>
            <person name="Welker D."/>
            <person name="Hughes J."/>
            <person name="Goh Y."/>
            <person name="Benson A."/>
            <person name="Baldwin K."/>
            <person name="Lee J.-H."/>
            <person name="Diaz-Muniz I."/>
            <person name="Dosti B."/>
            <person name="Smeianov V."/>
            <person name="Wechter W."/>
            <person name="Barabote R."/>
            <person name="Lorca G."/>
            <person name="Altermann E."/>
            <person name="Barrangou R."/>
            <person name="Ganesan B."/>
            <person name="Xie Y."/>
            <person name="Rawsthorne H."/>
            <person name="Tamir D."/>
            <person name="Parker C."/>
            <person name="Breidt F."/>
            <person name="Broadbent J.R."/>
            <person name="Hutkins R."/>
            <person name="O'Sullivan D."/>
            <person name="Steele J."/>
            <person name="Unlu G."/>
            <person name="Saier M.H. Jr."/>
            <person name="Klaenhammer T."/>
            <person name="Richardson P."/>
            <person name="Kozyavkin S."/>
            <person name="Weimer B.C."/>
            <person name="Mills D.A."/>
        </authorList>
    </citation>
    <scope>NUCLEOTIDE SEQUENCE [LARGE SCALE GENOMIC DNA]</scope>
    <source>
        <strain>ATCC BAA-331 / PSU-1</strain>
    </source>
</reference>
<protein>
    <recommendedName>
        <fullName evidence="1">Uridylate kinase</fullName>
        <shortName evidence="1">UK</shortName>
        <ecNumber evidence="1">2.7.4.22</ecNumber>
    </recommendedName>
    <alternativeName>
        <fullName evidence="1">Uridine monophosphate kinase</fullName>
        <shortName evidence="1">UMP kinase</shortName>
        <shortName evidence="1">UMPK</shortName>
    </alternativeName>
</protein>